<name>FSP1_HUMAN</name>
<dbReference type="EC" id="1.6.5.-" evidence="11 12 13"/>
<dbReference type="EMBL" id="AF337957">
    <property type="protein sequence ID" value="AAL73229.1"/>
    <property type="molecule type" value="mRNA"/>
</dbReference>
<dbReference type="EMBL" id="AF506757">
    <property type="protein sequence ID" value="AAM77596.1"/>
    <property type="molecule type" value="mRNA"/>
</dbReference>
<dbReference type="EMBL" id="AK027403">
    <property type="protein sequence ID" value="BAB55089.1"/>
    <property type="molecule type" value="mRNA"/>
</dbReference>
<dbReference type="EMBL" id="AK127353">
    <property type="protein sequence ID" value="BAG54492.1"/>
    <property type="molecule type" value="mRNA"/>
</dbReference>
<dbReference type="EMBL" id="AL731540">
    <property type="status" value="NOT_ANNOTATED_CDS"/>
    <property type="molecule type" value="Genomic_DNA"/>
</dbReference>
<dbReference type="EMBL" id="CH471083">
    <property type="protein sequence ID" value="EAW54376.1"/>
    <property type="molecule type" value="Genomic_DNA"/>
</dbReference>
<dbReference type="EMBL" id="BC006121">
    <property type="protein sequence ID" value="AAH06121.1"/>
    <property type="molecule type" value="mRNA"/>
</dbReference>
<dbReference type="EMBL" id="BC023601">
    <property type="protein sequence ID" value="AAH23601.1"/>
    <property type="molecule type" value="mRNA"/>
</dbReference>
<dbReference type="EMBL" id="BX537621">
    <property type="protein sequence ID" value="CAH56481.1"/>
    <property type="molecule type" value="mRNA"/>
</dbReference>
<dbReference type="CCDS" id="CCDS7297.1">
    <molecule id="Q9BRQ8-1"/>
</dbReference>
<dbReference type="RefSeq" id="NP_001185625.1">
    <molecule id="Q9BRQ8-1"/>
    <property type="nucleotide sequence ID" value="NM_001198696.2"/>
</dbReference>
<dbReference type="RefSeq" id="NP_116186.1">
    <molecule id="Q9BRQ8-1"/>
    <property type="nucleotide sequence ID" value="NM_032797.6"/>
</dbReference>
<dbReference type="PDB" id="8JSC">
    <property type="method" value="X-ray"/>
    <property type="resolution" value="2.16 A"/>
    <property type="chains" value="C=2-373"/>
</dbReference>
<dbReference type="PDB" id="8WIK">
    <property type="method" value="X-ray"/>
    <property type="resolution" value="2.00 A"/>
    <property type="chains" value="A=1-373"/>
</dbReference>
<dbReference type="PDB" id="8YO8">
    <property type="method" value="X-ray"/>
    <property type="resolution" value="2.00 A"/>
    <property type="chains" value="A=10-373"/>
</dbReference>
<dbReference type="PDB" id="8YOQ">
    <property type="method" value="X-ray"/>
    <property type="resolution" value="1.79 A"/>
    <property type="chains" value="A=10-373"/>
</dbReference>
<dbReference type="PDB" id="8YOX">
    <property type="method" value="X-ray"/>
    <property type="resolution" value="2.48 A"/>
    <property type="chains" value="A=10-373"/>
</dbReference>
<dbReference type="PDBsum" id="8JSC"/>
<dbReference type="PDBsum" id="8WIK"/>
<dbReference type="PDBsum" id="8YO8"/>
<dbReference type="PDBsum" id="8YOQ"/>
<dbReference type="PDBsum" id="8YOX"/>
<dbReference type="SMR" id="Q9BRQ8"/>
<dbReference type="BioGRID" id="124325">
    <property type="interactions" value="35"/>
</dbReference>
<dbReference type="ELM" id="Q9BRQ8"/>
<dbReference type="FunCoup" id="Q9BRQ8">
    <property type="interactions" value="619"/>
</dbReference>
<dbReference type="IntAct" id="Q9BRQ8">
    <property type="interactions" value="20"/>
</dbReference>
<dbReference type="STRING" id="9606.ENSP00000478931"/>
<dbReference type="GlyGen" id="Q9BRQ8">
    <property type="glycosylation" value="2 sites, 1 N-linked glycan (1 site), 1 O-linked glycan (1 site)"/>
</dbReference>
<dbReference type="iPTMnet" id="Q9BRQ8"/>
<dbReference type="PhosphoSitePlus" id="Q9BRQ8"/>
<dbReference type="BioMuta" id="AIFM2"/>
<dbReference type="DMDM" id="74752283"/>
<dbReference type="jPOST" id="Q9BRQ8"/>
<dbReference type="MassIVE" id="Q9BRQ8"/>
<dbReference type="PaxDb" id="9606-ENSP00000478931"/>
<dbReference type="PeptideAtlas" id="Q9BRQ8"/>
<dbReference type="ProteomicsDB" id="78808">
    <molecule id="Q9BRQ8-1"/>
</dbReference>
<dbReference type="ProteomicsDB" id="78809">
    <molecule id="Q9BRQ8-2"/>
</dbReference>
<dbReference type="Pumba" id="Q9BRQ8"/>
<dbReference type="Antibodypedia" id="14832">
    <property type="antibodies" value="290 antibodies from 36 providers"/>
</dbReference>
<dbReference type="DNASU" id="84883"/>
<dbReference type="Ensembl" id="ENST00000307864.3">
    <molecule id="Q9BRQ8-1"/>
    <property type="protein sequence ID" value="ENSP00000312370.1"/>
    <property type="gene ID" value="ENSG00000042286.15"/>
</dbReference>
<dbReference type="Ensembl" id="ENST00000373248.5">
    <molecule id="Q9BRQ8-1"/>
    <property type="protein sequence ID" value="ENSP00000362345.1"/>
    <property type="gene ID" value="ENSG00000042286.15"/>
</dbReference>
<dbReference type="Ensembl" id="ENST00000613322.4">
    <molecule id="Q9BRQ8-1"/>
    <property type="protein sequence ID" value="ENSP00000478931.1"/>
    <property type="gene ID" value="ENSG00000042286.15"/>
</dbReference>
<dbReference type="GeneID" id="84883"/>
<dbReference type="KEGG" id="hsa:84883"/>
<dbReference type="MANE-Select" id="ENST00000307864.3">
    <property type="protein sequence ID" value="ENSP00000312370.1"/>
    <property type="RefSeq nucleotide sequence ID" value="NM_032797.6"/>
    <property type="RefSeq protein sequence ID" value="NP_116186.1"/>
</dbReference>
<dbReference type="UCSC" id="uc001jqp.3">
    <molecule id="Q9BRQ8-1"/>
    <property type="organism name" value="human"/>
</dbReference>
<dbReference type="AGR" id="HGNC:21411"/>
<dbReference type="CTD" id="84883"/>
<dbReference type="DisGeNET" id="84883"/>
<dbReference type="GeneCards" id="AIFM2"/>
<dbReference type="HGNC" id="HGNC:21411">
    <property type="gene designation" value="AIFM2"/>
</dbReference>
<dbReference type="HPA" id="ENSG00000042286">
    <property type="expression patterns" value="Low tissue specificity"/>
</dbReference>
<dbReference type="MIM" id="605159">
    <property type="type" value="gene"/>
</dbReference>
<dbReference type="neXtProt" id="NX_Q9BRQ8"/>
<dbReference type="OpenTargets" id="ENSG00000042286"/>
<dbReference type="PharmGKB" id="PA162376150"/>
<dbReference type="VEuPathDB" id="HostDB:ENSG00000042286"/>
<dbReference type="eggNOG" id="KOG1336">
    <property type="taxonomic scope" value="Eukaryota"/>
</dbReference>
<dbReference type="GeneTree" id="ENSGT00390000004582"/>
<dbReference type="HOGENOM" id="CLU_019845_2_1_1"/>
<dbReference type="InParanoid" id="Q9BRQ8"/>
<dbReference type="OMA" id="TWEIAPP"/>
<dbReference type="OrthoDB" id="3244603at2759"/>
<dbReference type="PAN-GO" id="Q9BRQ8">
    <property type="GO annotations" value="6 GO annotations based on evolutionary models"/>
</dbReference>
<dbReference type="PhylomeDB" id="Q9BRQ8"/>
<dbReference type="TreeFam" id="TF329369"/>
<dbReference type="BRENDA" id="7.1.1.2">
    <property type="organism ID" value="2681"/>
</dbReference>
<dbReference type="PathwayCommons" id="Q9BRQ8"/>
<dbReference type="Reactome" id="R-HSA-6803204">
    <property type="pathway name" value="TP53 Regulates Transcription of Genes Involved in Cytochrome C Release"/>
</dbReference>
<dbReference type="SignaLink" id="Q9BRQ8"/>
<dbReference type="SIGNOR" id="Q9BRQ8"/>
<dbReference type="BioGRID-ORCS" id="84883">
    <property type="hits" value="23 hits in 1149 CRISPR screens"/>
</dbReference>
<dbReference type="ChiTaRS" id="AIFM2">
    <property type="organism name" value="human"/>
</dbReference>
<dbReference type="GeneWiki" id="AIFM2"/>
<dbReference type="GenomeRNAi" id="84883"/>
<dbReference type="Pharos" id="Q9BRQ8">
    <property type="development level" value="Tbio"/>
</dbReference>
<dbReference type="PRO" id="PR:Q9BRQ8"/>
<dbReference type="Proteomes" id="UP000005640">
    <property type="component" value="Chromosome 10"/>
</dbReference>
<dbReference type="RNAct" id="Q9BRQ8">
    <property type="molecule type" value="protein"/>
</dbReference>
<dbReference type="Bgee" id="ENSG00000042286">
    <property type="expression patterns" value="Expressed in adipose tissue and 147 other cell types or tissues"/>
</dbReference>
<dbReference type="GO" id="GO:0005737">
    <property type="term" value="C:cytoplasm"/>
    <property type="evidence" value="ECO:0000314"/>
    <property type="project" value="MGI"/>
</dbReference>
<dbReference type="GO" id="GO:0005829">
    <property type="term" value="C:cytosol"/>
    <property type="evidence" value="ECO:0000314"/>
    <property type="project" value="UniProtKB"/>
</dbReference>
<dbReference type="GO" id="GO:0005615">
    <property type="term" value="C:extracellular space"/>
    <property type="evidence" value="ECO:0007005"/>
    <property type="project" value="UniProtKB"/>
</dbReference>
<dbReference type="GO" id="GO:0005811">
    <property type="term" value="C:lipid droplet"/>
    <property type="evidence" value="ECO:0000314"/>
    <property type="project" value="UniProtKB"/>
</dbReference>
<dbReference type="GO" id="GO:0005741">
    <property type="term" value="C:mitochondrial outer membrane"/>
    <property type="evidence" value="ECO:0000314"/>
    <property type="project" value="UniProtKB"/>
</dbReference>
<dbReference type="GO" id="GO:0005739">
    <property type="term" value="C:mitochondrion"/>
    <property type="evidence" value="ECO:0000314"/>
    <property type="project" value="MGI"/>
</dbReference>
<dbReference type="GO" id="GO:0005634">
    <property type="term" value="C:nucleus"/>
    <property type="evidence" value="ECO:0000250"/>
    <property type="project" value="UniProtKB"/>
</dbReference>
<dbReference type="GO" id="GO:0005886">
    <property type="term" value="C:plasma membrane"/>
    <property type="evidence" value="ECO:0000314"/>
    <property type="project" value="UniProtKB"/>
</dbReference>
<dbReference type="GO" id="GO:0003677">
    <property type="term" value="F:DNA binding"/>
    <property type="evidence" value="ECO:0000314"/>
    <property type="project" value="UniProtKB"/>
</dbReference>
<dbReference type="GO" id="GO:0004174">
    <property type="term" value="F:electron-transferring-flavoprotein dehydrogenase activity"/>
    <property type="evidence" value="ECO:0000314"/>
    <property type="project" value="UniProtKB"/>
</dbReference>
<dbReference type="GO" id="GO:0050660">
    <property type="term" value="F:flavin adenine dinucleotide binding"/>
    <property type="evidence" value="ECO:0000314"/>
    <property type="project" value="UniProtKB"/>
</dbReference>
<dbReference type="GO" id="GO:0016655">
    <property type="term" value="F:oxidoreductase activity, acting on NAD(P)H, quinone or similar compound as acceptor"/>
    <property type="evidence" value="ECO:0000314"/>
    <property type="project" value="UniProtKB"/>
</dbReference>
<dbReference type="GO" id="GO:0008637">
    <property type="term" value="P:apoptotic mitochondrial changes"/>
    <property type="evidence" value="ECO:0000314"/>
    <property type="project" value="MGI"/>
</dbReference>
<dbReference type="GO" id="GO:1990748">
    <property type="term" value="P:cellular detoxification"/>
    <property type="evidence" value="ECO:0000314"/>
    <property type="project" value="UniProt"/>
</dbReference>
<dbReference type="GO" id="GO:0110076">
    <property type="term" value="P:negative regulation of ferroptosis"/>
    <property type="evidence" value="ECO:0000314"/>
    <property type="project" value="UniProtKB"/>
</dbReference>
<dbReference type="GO" id="GO:0043065">
    <property type="term" value="P:positive regulation of apoptotic process"/>
    <property type="evidence" value="ECO:0000314"/>
    <property type="project" value="UniProtKB"/>
</dbReference>
<dbReference type="GO" id="GO:1900407">
    <property type="term" value="P:regulation of cellular response to oxidative stress"/>
    <property type="evidence" value="ECO:0000250"/>
    <property type="project" value="UniProtKB"/>
</dbReference>
<dbReference type="GO" id="GO:0006743">
    <property type="term" value="P:ubiquinone metabolic process"/>
    <property type="evidence" value="ECO:0000314"/>
    <property type="project" value="UniProtKB"/>
</dbReference>
<dbReference type="GO" id="GO:0042373">
    <property type="term" value="P:vitamin K metabolic process"/>
    <property type="evidence" value="ECO:0000314"/>
    <property type="project" value="UniProtKB"/>
</dbReference>
<dbReference type="FunFam" id="3.50.50.100:FF:000003">
    <property type="entry name" value="Apoptosis-inducing factor, mitochondrion-associated, 2"/>
    <property type="match status" value="1"/>
</dbReference>
<dbReference type="Gene3D" id="3.50.50.100">
    <property type="match status" value="1"/>
</dbReference>
<dbReference type="InterPro" id="IPR036188">
    <property type="entry name" value="FAD/NAD-bd_sf"/>
</dbReference>
<dbReference type="InterPro" id="IPR023753">
    <property type="entry name" value="FAD/NAD-binding_dom"/>
</dbReference>
<dbReference type="PANTHER" id="PTHR43735">
    <property type="entry name" value="APOPTOSIS-INDUCING FACTOR 1"/>
    <property type="match status" value="1"/>
</dbReference>
<dbReference type="PANTHER" id="PTHR43735:SF3">
    <property type="entry name" value="FERROPTOSIS SUPPRESSOR PROTEIN 1"/>
    <property type="match status" value="1"/>
</dbReference>
<dbReference type="Pfam" id="PF07992">
    <property type="entry name" value="Pyr_redox_2"/>
    <property type="match status" value="1"/>
</dbReference>
<dbReference type="PRINTS" id="PR00368">
    <property type="entry name" value="FADPNR"/>
</dbReference>
<dbReference type="PRINTS" id="PR00469">
    <property type="entry name" value="PNDRDTASEII"/>
</dbReference>
<dbReference type="SUPFAM" id="SSF51905">
    <property type="entry name" value="FAD/NAD(P)-binding domain"/>
    <property type="match status" value="1"/>
</dbReference>
<comment type="function">
    <text evidence="7 10 11 12 13 14">A NAD(P)H-dependent oxidoreductase that acts as a key inhibitor of ferroptosis (PubMed:31634899, PubMed:31634900, PubMed:35922516, PubMed:39881208). At the plasma membrane, catalyzes reduction of coenzyme Q/ubiquinone-10 to ubiquinol-10, a lipophilic radical-trapping antioxidant that prevents lipid oxidative damage and consequently ferroptosis (PubMed:31634899, PubMed:31634900). Acts in parallel to GPX4 to suppress phospholipid peroxidation and ferroptosis (PubMed:31634899, PubMed:31634900). This anti-ferroptotic function is independent of cellular glutathione levels (PubMed:31634899, PubMed:31634900). Also acts as a potent radical-trapping antioxidant by mediating warfarin-resistant vitamin K reduction in the canonical vitamin K cycle: catalyzes NAD(P)H-dependent reduction of vitamin K (phylloquinone, menaquinone-4 and menadione) to hydroquinone forms (PubMed:35922516). Hydroquinones act as potent radical-trapping antioxidants inhibitor of phospholipid peroxidation and ferroptosis (PubMed:35922516). May play a role in mitochondrial stress signaling (PubMed:26689472). Upon oxidative stress, associates with the lipid peroxidation end product 4-hydroxy-2-nonenal (HNE) forming a lipid adduct devoid of oxidoreductase activity, which then translocates from mitochondria into the nucleus triggering DNA damage and cell death (PubMed:26689472). Capable of DNA binding in a non-sequence specific way (PubMed:15958387).</text>
</comment>
<comment type="catalytic activity">
    <reaction evidence="23 24">
        <text>ubiquinone-10 + NADH + H(+) = ubiquinol-10 + NAD(+)</text>
        <dbReference type="Rhea" id="RHEA:61984"/>
        <dbReference type="ChEBI" id="CHEBI:15378"/>
        <dbReference type="ChEBI" id="CHEBI:46245"/>
        <dbReference type="ChEBI" id="CHEBI:57540"/>
        <dbReference type="ChEBI" id="CHEBI:57945"/>
        <dbReference type="ChEBI" id="CHEBI:64183"/>
    </reaction>
    <physiologicalReaction direction="left-to-right" evidence="23 24">
        <dbReference type="Rhea" id="RHEA:61985"/>
    </physiologicalReaction>
</comment>
<comment type="catalytic activity">
    <reaction evidence="13">
        <text>phylloquinone + NADH + H(+) = phylloquinol + NAD(+)</text>
        <dbReference type="Rhea" id="RHEA:74075"/>
        <dbReference type="ChEBI" id="CHEBI:15378"/>
        <dbReference type="ChEBI" id="CHEBI:18067"/>
        <dbReference type="ChEBI" id="CHEBI:28433"/>
        <dbReference type="ChEBI" id="CHEBI:57540"/>
        <dbReference type="ChEBI" id="CHEBI:57945"/>
    </reaction>
    <physiologicalReaction direction="left-to-right" evidence="13">
        <dbReference type="Rhea" id="RHEA:74076"/>
    </physiologicalReaction>
</comment>
<comment type="catalytic activity">
    <reaction evidence="13">
        <text>menaquinone-4 + NADH + H(+) = menaquinol-4 + NAD(+)</text>
        <dbReference type="Rhea" id="RHEA:74079"/>
        <dbReference type="ChEBI" id="CHEBI:15378"/>
        <dbReference type="ChEBI" id="CHEBI:57540"/>
        <dbReference type="ChEBI" id="CHEBI:57945"/>
        <dbReference type="ChEBI" id="CHEBI:78277"/>
        <dbReference type="ChEBI" id="CHEBI:193091"/>
    </reaction>
    <physiologicalReaction direction="left-to-right" evidence="13">
        <dbReference type="Rhea" id="RHEA:74080"/>
    </physiologicalReaction>
</comment>
<comment type="catalytic activity">
    <reaction evidence="13">
        <text>menadione + NADH + H(+) = menadiol + NAD(+)</text>
        <dbReference type="Rhea" id="RHEA:69695"/>
        <dbReference type="ChEBI" id="CHEBI:6746"/>
        <dbReference type="ChEBI" id="CHEBI:15378"/>
        <dbReference type="ChEBI" id="CHEBI:28869"/>
        <dbReference type="ChEBI" id="CHEBI:57540"/>
        <dbReference type="ChEBI" id="CHEBI:57945"/>
    </reaction>
    <physiologicalReaction direction="left-to-right" evidence="13">
        <dbReference type="Rhea" id="RHEA:69696"/>
    </physiologicalReaction>
</comment>
<comment type="cofactor">
    <cofactor evidence="7">
        <name>6-hydroxy-FAD</name>
        <dbReference type="ChEBI" id="CHEBI:60470"/>
    </cofactor>
    <text evidence="7">Binds 6-hydroxy-FAD non-covalently.</text>
</comment>
<comment type="activity regulation">
    <text evidence="1">The modification by 4-hydroxy-2-nonenal (HNE) adduction in mitochondria results in loss of the oxidoreductase activity and activation of a novel function in mitochondrial oxidative stress signaling.</text>
</comment>
<comment type="subunit">
    <text evidence="1">Interacts with importin subunits KPNA2 and IPO5; this interaction likely mediates the translocation into the nucleus upon oxidative stress.</text>
</comment>
<comment type="interaction">
    <interactant intactId="EBI-3956936">
        <id>Q9BRQ8</id>
    </interactant>
    <interactant intactId="EBI-723824">
        <id>Q8N129</id>
        <label>CNPY4</label>
    </interactant>
    <organismsDiffer>false</organismsDiffer>
    <experiments>3</experiments>
</comment>
<comment type="interaction">
    <interactant intactId="EBI-3956936">
        <id>Q9BRQ8</id>
    </interactant>
    <interactant intactId="EBI-2130429">
        <id>Q9BYV2</id>
        <label>TRIM54</label>
    </interactant>
    <organismsDiffer>false</organismsDiffer>
    <experiments>3</experiments>
</comment>
<comment type="interaction">
    <interactant intactId="EBI-3956936">
        <id>Q9BRQ8</id>
    </interactant>
    <interactant intactId="EBI-11525489">
        <id>Q86WT6-2</id>
        <label>TRIM69</label>
    </interactant>
    <organismsDiffer>false</organismsDiffer>
    <experiments>3</experiments>
</comment>
<comment type="subcellular location">
    <subcellularLocation>
        <location evidence="12">Lipid droplet</location>
    </subcellularLocation>
    <subcellularLocation>
        <location evidence="12">Cell membrane</location>
        <topology evidence="22">Lipid-anchor</topology>
    </subcellularLocation>
    <subcellularLocation>
        <location evidence="3 4 10">Cytoplasm</location>
    </subcellularLocation>
    <subcellularLocation>
        <location evidence="3 10">Mitochondrion membrane</location>
    </subcellularLocation>
    <subcellularLocation>
        <location evidence="10">Nucleus</location>
    </subcellularLocation>
</comment>
<comment type="alternative products">
    <event type="alternative splicing"/>
    <isoform>
        <id>Q9BRQ8-1</id>
        <name evidence="3 4">1</name>
        <sequence type="displayed"/>
    </isoform>
    <isoform>
        <id>Q9BRQ8-2</id>
        <name evidence="6">2</name>
        <sequence type="described" ref="VSP_052047 VSP_052048"/>
    </isoform>
</comment>
<comment type="tissue specificity">
    <text evidence="4">Detected in most normal tissues as two transcripts of 1.8 and 4.0 kb in length, respectively. Highly expressed in heart, moderately in liver and skeletal muscles, and expressed at low levels in placenta, lung, kidney, and pancreas. Both transcripts expressed following p53/TP53 induction. The shorter 1.8 kb transcript seems to be the major transcript in EB1 colon cancer cells.</text>
</comment>
<comment type="induction">
    <text evidence="4 5">Expression detected at 4 hours after induction by p53/TP53. Down-regulated in a wide range of human tumors.</text>
</comment>
<comment type="PTM">
    <text evidence="12">N-myristoylation at Gly-2 mediates the recruitment to lipid droplets and plasma membrane, enabling its anti-lipid peroxidation activity.</text>
</comment>
<comment type="PTM">
    <text evidence="14">Acetylation at Lys-168 prevents AIFM2 ubiquitination and degradation, thereby inhibiting ferroptosis. KAT2B mediates acetylation at Lys-168, while HDAC3 removes it.</text>
</comment>
<comment type="PTM">
    <text evidence="14">Ubiquitinated. AIFM2 undergoes 'Lys-29'-ubiquitination and proteasomal degradation, which is inhibited by acetylation at Lys-168.</text>
</comment>
<comment type="similarity">
    <text evidence="22">Belongs to the FAD-dependent oxidoreductase family.</text>
</comment>
<comment type="caution">
    <text evidence="3 4 7 10 11 12">Conflicting data exist on the pro-apoptotic function of the protein. It was initially claimed that overexpression of FSP1 induces caspase-independent apoptosis, but new evidence disputes this function.</text>
</comment>
<comment type="online information" name="Atlas of Genetics and Cytogenetics in Oncology and Haematology">
    <link uri="https://atlasgeneticsoncology.org/gene/41842/AIFM2"/>
</comment>
<comment type="online information" name="Protein Spotlight">
    <link uri="https://www.proteinspotlight.org/back_issues/254/"/>
    <text>On a tightrope - Issue 254 of January 2023</text>
</comment>
<evidence type="ECO:0000250" key="1">
    <source>
        <dbReference type="UniProtKB" id="Q8BUE4"/>
    </source>
</evidence>
<evidence type="ECO:0000255" key="2"/>
<evidence type="ECO:0000269" key="3">
    <source>
    </source>
</evidence>
<evidence type="ECO:0000269" key="4">
    <source>
    </source>
</evidence>
<evidence type="ECO:0000269" key="5">
    <source>
    </source>
</evidence>
<evidence type="ECO:0000269" key="6">
    <source>
    </source>
</evidence>
<evidence type="ECO:0000269" key="7">
    <source>
    </source>
</evidence>
<evidence type="ECO:0000269" key="8">
    <source>
    </source>
</evidence>
<evidence type="ECO:0000269" key="9">
    <source>
    </source>
</evidence>
<evidence type="ECO:0000269" key="10">
    <source>
    </source>
</evidence>
<evidence type="ECO:0000269" key="11">
    <source>
    </source>
</evidence>
<evidence type="ECO:0000269" key="12">
    <source>
    </source>
</evidence>
<evidence type="ECO:0000269" key="13">
    <source>
    </source>
</evidence>
<evidence type="ECO:0000269" key="14">
    <source>
    </source>
</evidence>
<evidence type="ECO:0000303" key="15">
    <source>
    </source>
</evidence>
<evidence type="ECO:0000303" key="16">
    <source>
    </source>
</evidence>
<evidence type="ECO:0000303" key="17">
    <source>
    </source>
</evidence>
<evidence type="ECO:0000303" key="18">
    <source>
    </source>
</evidence>
<evidence type="ECO:0000303" key="19">
    <source>
    </source>
</evidence>
<evidence type="ECO:0000303" key="20">
    <source>
    </source>
</evidence>
<evidence type="ECO:0000303" key="21">
    <source>
    </source>
</evidence>
<evidence type="ECO:0000305" key="22"/>
<evidence type="ECO:0000305" key="23">
    <source>
    </source>
</evidence>
<evidence type="ECO:0000305" key="24">
    <source>
    </source>
</evidence>
<evidence type="ECO:0000312" key="25">
    <source>
        <dbReference type="EMBL" id="AAH06121.1"/>
    </source>
</evidence>
<evidence type="ECO:0000312" key="26">
    <source>
        <dbReference type="EMBL" id="AAH23601.1"/>
    </source>
</evidence>
<evidence type="ECO:0000312" key="27">
    <source>
        <dbReference type="EMBL" id="AAL73229.1"/>
    </source>
</evidence>
<evidence type="ECO:0000312" key="28">
    <source>
        <dbReference type="EMBL" id="AAM77596.1"/>
    </source>
</evidence>
<evidence type="ECO:0000312" key="29">
    <source>
        <dbReference type="EMBL" id="AL731540"/>
    </source>
</evidence>
<evidence type="ECO:0000312" key="30">
    <source>
        <dbReference type="EMBL" id="BAB55089.1"/>
    </source>
</evidence>
<evidence type="ECO:0000312" key="31">
    <source>
        <dbReference type="EMBL" id="CAH56481.1"/>
    </source>
</evidence>
<evidence type="ECO:0000312" key="32">
    <source>
        <dbReference type="HGNC" id="HGNC:21411"/>
    </source>
</evidence>
<protein>
    <recommendedName>
        <fullName evidence="20 21">Ferroptosis suppressor protein 1</fullName>
        <shortName evidence="20 21">FSP1</shortName>
        <ecNumber evidence="11 12 13">1.6.5.-</ecNumber>
    </recommendedName>
    <alternativeName>
        <fullName evidence="15">Apoptosis-inducing factor homologous mitochondrion-associated inducer of death</fullName>
        <shortName evidence="15">AMID</shortName>
    </alternativeName>
    <alternativeName>
        <fullName evidence="16">p53-responsive gene 3 protein</fullName>
    </alternativeName>
</protein>
<sequence>MGSQVSVESGALHVVIVGGGFGGIAAASQLQALNVPFMLVDMKDSFHHNVAALRASVETGFAKKTFISYSVTFKDNFRQGLVVGIDLKNQMVLLQGGEALPFSHLILATGSTGPFPGKFNEVSSQQAAIQAYEDMVRQVQRSRFIVVVGGGSAGVEMAAEIKTEYPEKEVTLIHSQVALADKELLPSVRQEVKEILLRKGVQLLLSERVSNLEELPLNEYREYIKVQTDKGTEVATNLVILCTGIKINSSAYRKAFESRLASSGALRVNEHLQVEGHSNVYAIGDCADVRTPKMAYLAGLHANIAVANIVNSVKQRPLQAYKPGALTFLLSMGRNDGVGQISGFYVGRLMVRLTKSRDLFVSTSWKTMRQSPP</sequence>
<keyword id="KW-0002">3D-structure</keyword>
<keyword id="KW-0007">Acetylation</keyword>
<keyword id="KW-0025">Alternative splicing</keyword>
<keyword id="KW-1003">Cell membrane</keyword>
<keyword id="KW-0963">Cytoplasm</keyword>
<keyword id="KW-0238">DNA-binding</keyword>
<keyword id="KW-0274">FAD</keyword>
<keyword id="KW-0285">Flavoprotein</keyword>
<keyword id="KW-0551">Lipid droplet</keyword>
<keyword id="KW-0449">Lipoprotein</keyword>
<keyword id="KW-0472">Membrane</keyword>
<keyword id="KW-0496">Mitochondrion</keyword>
<keyword id="KW-0519">Myristate</keyword>
<keyword id="KW-0539">Nucleus</keyword>
<keyword id="KW-0560">Oxidoreductase</keyword>
<keyword id="KW-1267">Proteomics identification</keyword>
<keyword id="KW-1185">Reference proteome</keyword>
<keyword id="KW-0812">Transmembrane</keyword>
<keyword id="KW-1133">Transmembrane helix</keyword>
<keyword id="KW-0832">Ubl conjugation</keyword>
<feature type="initiator methionine" description="Removed" evidence="9">
    <location>
        <position position="1"/>
    </location>
</feature>
<feature type="chain" id="PRO_0000238922" description="Ferroptosis suppressor protein 1">
    <location>
        <begin position="2"/>
        <end position="373"/>
    </location>
</feature>
<feature type="transmembrane region" description="Helical" evidence="2">
    <location>
        <begin position="7"/>
        <end position="27"/>
    </location>
</feature>
<feature type="binding site" evidence="2">
    <location>
        <begin position="18"/>
        <end position="22"/>
    </location>
    <ligand>
        <name>6-hydroxy-FAD</name>
        <dbReference type="ChEBI" id="CHEBI:60470"/>
    </ligand>
</feature>
<feature type="binding site" evidence="2">
    <location>
        <position position="54"/>
    </location>
    <ligand>
        <name>6-hydroxy-FAD</name>
        <dbReference type="ChEBI" id="CHEBI:60470"/>
    </ligand>
</feature>
<feature type="binding site" evidence="2">
    <location>
        <position position="82"/>
    </location>
    <ligand>
        <name>6-hydroxy-FAD</name>
        <dbReference type="ChEBI" id="CHEBI:60470"/>
    </ligand>
</feature>
<feature type="binding site" evidence="2">
    <location>
        <position position="285"/>
    </location>
    <ligand>
        <name>6-hydroxy-FAD</name>
        <dbReference type="ChEBI" id="CHEBI:60470"/>
    </ligand>
</feature>
<feature type="site" description="4-hydroxy-2-nonenal adduction" evidence="1">
    <location>
        <position position="174"/>
    </location>
</feature>
<feature type="modified residue" description="N6-acetyllysine; by KAT2B" evidence="14">
    <location>
        <position position="168"/>
    </location>
</feature>
<feature type="lipid moiety-binding region" description="N-myristoyl glycine" evidence="8 9 11 12">
    <location>
        <position position="2"/>
    </location>
</feature>
<feature type="splice variant" id="VSP_052047" description="In isoform 2." evidence="17 18">
    <location>
        <begin position="99"/>
        <end position="138"/>
    </location>
</feature>
<feature type="splice variant" id="VSP_052048" description="In isoform 2." evidence="17 18">
    <original>S</original>
    <variation>SLLG</variation>
    <location>
        <position position="206"/>
    </location>
</feature>
<feature type="sequence variant" id="VAR_050651" description="In dbSNP:rs10999147.">
    <original>M</original>
    <variation>T</variation>
    <location>
        <position position="135"/>
    </location>
</feature>
<feature type="sequence variant" id="VAR_050652" description="In dbSNP:rs2271694.">
    <original>D</original>
    <variation>N</variation>
    <location>
        <position position="288"/>
    </location>
</feature>
<feature type="mutagenesis site" description="Impairs N-myristoylation and ferroptosis suppression." evidence="11">
    <original>G</original>
    <variation>A</variation>
    <location>
        <position position="2"/>
    </location>
</feature>
<feature type="mutagenesis site" description="Impairs the reductase activity toward coenzyme Q1/ubiquinone-1. Impairs ferroptosis suppression." evidence="12">
    <original>E</original>
    <variation>A</variation>
    <location>
        <position position="156"/>
    </location>
</feature>
<feature type="mutagenesis site" description="Acetylation-mimetic. Results in reduced ubiquitination and increased stability of the protein." evidence="14">
    <original>K</original>
    <variation>Q</variation>
    <location>
        <position position="168"/>
    </location>
</feature>
<feature type="mutagenesis site" description="No acetylation at this site. Results in increased ubiquitination and reduced stability of the protein. Loss of function in negative regulation of ferroptosis." evidence="14">
    <original>K</original>
    <variation>R</variation>
    <location>
        <position position="168"/>
    </location>
</feature>
<reference evidence="22 27" key="1">
    <citation type="journal article" date="2002" name="FEBS Lett.">
        <title>A novel p53-inducible apoptogenic gene, PRG3, encodes a homologue of the apoptosis-inducing factor (AIF).</title>
        <authorList>
            <person name="Ohiro Y."/>
            <person name="Garkavtsev I."/>
            <person name="Kobayashi S."/>
            <person name="Sreekumar K.R."/>
            <person name="Nantz R."/>
            <person name="Higashikubo B.T."/>
            <person name="Duffy S.L."/>
            <person name="Higashikubo R."/>
            <person name="Usheva A."/>
            <person name="Gius D."/>
            <person name="Kley N."/>
            <person name="Horikoshi N."/>
        </authorList>
    </citation>
    <scope>NUCLEOTIDE SEQUENCE [MRNA] (ISOFORM 1)</scope>
    <scope>SUBCELLULAR LOCATION</scope>
    <scope>TISSUE SPECIFICITY</scope>
    <scope>INDUCTION</scope>
    <scope>CAUTION</scope>
</reference>
<reference evidence="22 28" key="2">
    <citation type="journal article" date="2002" name="J. Biol. Chem.">
        <title>AMID, an apoptosis-inducing factor-homologous mitochondrion-associated protein, induces caspase-independent apoptosis.</title>
        <authorList>
            <person name="Wu M."/>
            <person name="Xu L.-G."/>
            <person name="Li X."/>
            <person name="Zhai Z."/>
            <person name="Shu H.-B."/>
        </authorList>
    </citation>
    <scope>NUCLEOTIDE SEQUENCE [MRNA] (ISOFORM 1)</scope>
    <scope>SUBCELLULAR LOCATION</scope>
    <scope>CAUTION</scope>
</reference>
<reference evidence="22 30" key="3">
    <citation type="journal article" date="2004" name="Nat. Genet.">
        <title>Complete sequencing and characterization of 21,243 full-length human cDNAs.</title>
        <authorList>
            <person name="Ota T."/>
            <person name="Suzuki Y."/>
            <person name="Nishikawa T."/>
            <person name="Otsuki T."/>
            <person name="Sugiyama T."/>
            <person name="Irie R."/>
            <person name="Wakamatsu A."/>
            <person name="Hayashi K."/>
            <person name="Sato H."/>
            <person name="Nagai K."/>
            <person name="Kimura K."/>
            <person name="Makita H."/>
            <person name="Sekine M."/>
            <person name="Obayashi M."/>
            <person name="Nishi T."/>
            <person name="Shibahara T."/>
            <person name="Tanaka T."/>
            <person name="Ishii S."/>
            <person name="Yamamoto J."/>
            <person name="Saito K."/>
            <person name="Kawai Y."/>
            <person name="Isono Y."/>
            <person name="Nakamura Y."/>
            <person name="Nagahari K."/>
            <person name="Murakami K."/>
            <person name="Yasuda T."/>
            <person name="Iwayanagi T."/>
            <person name="Wagatsuma M."/>
            <person name="Shiratori A."/>
            <person name="Sudo H."/>
            <person name="Hosoiri T."/>
            <person name="Kaku Y."/>
            <person name="Kodaira H."/>
            <person name="Kondo H."/>
            <person name="Sugawara M."/>
            <person name="Takahashi M."/>
            <person name="Kanda K."/>
            <person name="Yokoi T."/>
            <person name="Furuya T."/>
            <person name="Kikkawa E."/>
            <person name="Omura Y."/>
            <person name="Abe K."/>
            <person name="Kamihara K."/>
            <person name="Katsuta N."/>
            <person name="Sato K."/>
            <person name="Tanikawa M."/>
            <person name="Yamazaki M."/>
            <person name="Ninomiya K."/>
            <person name="Ishibashi T."/>
            <person name="Yamashita H."/>
            <person name="Murakawa K."/>
            <person name="Fujimori K."/>
            <person name="Tanai H."/>
            <person name="Kimata M."/>
            <person name="Watanabe M."/>
            <person name="Hiraoka S."/>
            <person name="Chiba Y."/>
            <person name="Ishida S."/>
            <person name="Ono Y."/>
            <person name="Takiguchi S."/>
            <person name="Watanabe S."/>
            <person name="Yosida M."/>
            <person name="Hotuta T."/>
            <person name="Kusano J."/>
            <person name="Kanehori K."/>
            <person name="Takahashi-Fujii A."/>
            <person name="Hara H."/>
            <person name="Tanase T.-O."/>
            <person name="Nomura Y."/>
            <person name="Togiya S."/>
            <person name="Komai F."/>
            <person name="Hara R."/>
            <person name="Takeuchi K."/>
            <person name="Arita M."/>
            <person name="Imose N."/>
            <person name="Musashino K."/>
            <person name="Yuuki H."/>
            <person name="Oshima A."/>
            <person name="Sasaki N."/>
            <person name="Aotsuka S."/>
            <person name="Yoshikawa Y."/>
            <person name="Matsunawa H."/>
            <person name="Ichihara T."/>
            <person name="Shiohata N."/>
            <person name="Sano S."/>
            <person name="Moriya S."/>
            <person name="Momiyama H."/>
            <person name="Satoh N."/>
            <person name="Takami S."/>
            <person name="Terashima Y."/>
            <person name="Suzuki O."/>
            <person name="Nakagawa S."/>
            <person name="Senoh A."/>
            <person name="Mizoguchi H."/>
            <person name="Goto Y."/>
            <person name="Shimizu F."/>
            <person name="Wakebe H."/>
            <person name="Hishigaki H."/>
            <person name="Watanabe T."/>
            <person name="Sugiyama A."/>
            <person name="Takemoto M."/>
            <person name="Kawakami B."/>
            <person name="Yamazaki M."/>
            <person name="Watanabe K."/>
            <person name="Kumagai A."/>
            <person name="Itakura S."/>
            <person name="Fukuzumi Y."/>
            <person name="Fujimori Y."/>
            <person name="Komiyama M."/>
            <person name="Tashiro H."/>
            <person name="Tanigami A."/>
            <person name="Fujiwara T."/>
            <person name="Ono T."/>
            <person name="Yamada K."/>
            <person name="Fujii Y."/>
            <person name="Ozaki K."/>
            <person name="Hirao M."/>
            <person name="Ohmori Y."/>
            <person name="Kawabata A."/>
            <person name="Hikiji T."/>
            <person name="Kobatake N."/>
            <person name="Inagaki H."/>
            <person name="Ikema Y."/>
            <person name="Okamoto S."/>
            <person name="Okitani R."/>
            <person name="Kawakami T."/>
            <person name="Noguchi S."/>
            <person name="Itoh T."/>
            <person name="Shigeta K."/>
            <person name="Senba T."/>
            <person name="Matsumura K."/>
            <person name="Nakajima Y."/>
            <person name="Mizuno T."/>
            <person name="Morinaga M."/>
            <person name="Sasaki M."/>
            <person name="Togashi T."/>
            <person name="Oyama M."/>
            <person name="Hata H."/>
            <person name="Watanabe M."/>
            <person name="Komatsu T."/>
            <person name="Mizushima-Sugano J."/>
            <person name="Satoh T."/>
            <person name="Shirai Y."/>
            <person name="Takahashi Y."/>
            <person name="Nakagawa K."/>
            <person name="Okumura K."/>
            <person name="Nagase T."/>
            <person name="Nomura N."/>
            <person name="Kikuchi H."/>
            <person name="Masuho Y."/>
            <person name="Yamashita R."/>
            <person name="Nakai K."/>
            <person name="Yada T."/>
            <person name="Nakamura Y."/>
            <person name="Ohara O."/>
            <person name="Isogai T."/>
            <person name="Sugano S."/>
        </authorList>
    </citation>
    <scope>NUCLEOTIDE SEQUENCE [LARGE SCALE MRNA] (ISOFORM 1)</scope>
    <source>
        <tissue>Hippocampus</tissue>
    </source>
</reference>
<reference evidence="22 29" key="4">
    <citation type="journal article" date="2004" name="Nature">
        <title>The DNA sequence and comparative analysis of human chromosome 10.</title>
        <authorList>
            <person name="Deloukas P."/>
            <person name="Earthrowl M.E."/>
            <person name="Grafham D.V."/>
            <person name="Rubenfield M."/>
            <person name="French L."/>
            <person name="Steward C.A."/>
            <person name="Sims S.K."/>
            <person name="Jones M.C."/>
            <person name="Searle S."/>
            <person name="Scott C."/>
            <person name="Howe K."/>
            <person name="Hunt S.E."/>
            <person name="Andrews T.D."/>
            <person name="Gilbert J.G.R."/>
            <person name="Swarbreck D."/>
            <person name="Ashurst J.L."/>
            <person name="Taylor A."/>
            <person name="Battles J."/>
            <person name="Bird C.P."/>
            <person name="Ainscough R."/>
            <person name="Almeida J.P."/>
            <person name="Ashwell R.I.S."/>
            <person name="Ambrose K.D."/>
            <person name="Babbage A.K."/>
            <person name="Bagguley C.L."/>
            <person name="Bailey J."/>
            <person name="Banerjee R."/>
            <person name="Bates K."/>
            <person name="Beasley H."/>
            <person name="Bray-Allen S."/>
            <person name="Brown A.J."/>
            <person name="Brown J.Y."/>
            <person name="Burford D.C."/>
            <person name="Burrill W."/>
            <person name="Burton J."/>
            <person name="Cahill P."/>
            <person name="Camire D."/>
            <person name="Carter N.P."/>
            <person name="Chapman J.C."/>
            <person name="Clark S.Y."/>
            <person name="Clarke G."/>
            <person name="Clee C.M."/>
            <person name="Clegg S."/>
            <person name="Corby N."/>
            <person name="Coulson A."/>
            <person name="Dhami P."/>
            <person name="Dutta I."/>
            <person name="Dunn M."/>
            <person name="Faulkner L."/>
            <person name="Frankish A."/>
            <person name="Frankland J.A."/>
            <person name="Garner P."/>
            <person name="Garnett J."/>
            <person name="Gribble S."/>
            <person name="Griffiths C."/>
            <person name="Grocock R."/>
            <person name="Gustafson E."/>
            <person name="Hammond S."/>
            <person name="Harley J.L."/>
            <person name="Hart E."/>
            <person name="Heath P.D."/>
            <person name="Ho T.P."/>
            <person name="Hopkins B."/>
            <person name="Horne J."/>
            <person name="Howden P.J."/>
            <person name="Huckle E."/>
            <person name="Hynds C."/>
            <person name="Johnson C."/>
            <person name="Johnson D."/>
            <person name="Kana A."/>
            <person name="Kay M."/>
            <person name="Kimberley A.M."/>
            <person name="Kershaw J.K."/>
            <person name="Kokkinaki M."/>
            <person name="Laird G.K."/>
            <person name="Lawlor S."/>
            <person name="Lee H.M."/>
            <person name="Leongamornlert D.A."/>
            <person name="Laird G."/>
            <person name="Lloyd C."/>
            <person name="Lloyd D.M."/>
            <person name="Loveland J."/>
            <person name="Lovell J."/>
            <person name="McLaren S."/>
            <person name="McLay K.E."/>
            <person name="McMurray A."/>
            <person name="Mashreghi-Mohammadi M."/>
            <person name="Matthews L."/>
            <person name="Milne S."/>
            <person name="Nickerson T."/>
            <person name="Nguyen M."/>
            <person name="Overton-Larty E."/>
            <person name="Palmer S.A."/>
            <person name="Pearce A.V."/>
            <person name="Peck A.I."/>
            <person name="Pelan S."/>
            <person name="Phillimore B."/>
            <person name="Porter K."/>
            <person name="Rice C.M."/>
            <person name="Rogosin A."/>
            <person name="Ross M.T."/>
            <person name="Sarafidou T."/>
            <person name="Sehra H.K."/>
            <person name="Shownkeen R."/>
            <person name="Skuce C.D."/>
            <person name="Smith M."/>
            <person name="Standring L."/>
            <person name="Sycamore N."/>
            <person name="Tester J."/>
            <person name="Thorpe A."/>
            <person name="Torcasso W."/>
            <person name="Tracey A."/>
            <person name="Tromans A."/>
            <person name="Tsolas J."/>
            <person name="Wall M."/>
            <person name="Walsh J."/>
            <person name="Wang H."/>
            <person name="Weinstock K."/>
            <person name="West A.P."/>
            <person name="Willey D.L."/>
            <person name="Whitehead S.L."/>
            <person name="Wilming L."/>
            <person name="Wray P.W."/>
            <person name="Young L."/>
            <person name="Chen Y."/>
            <person name="Lovering R.C."/>
            <person name="Moschonas N.K."/>
            <person name="Siebert R."/>
            <person name="Fechtel K."/>
            <person name="Bentley D."/>
            <person name="Durbin R.M."/>
            <person name="Hubbard T."/>
            <person name="Doucette-Stamm L."/>
            <person name="Beck S."/>
            <person name="Smith D.R."/>
            <person name="Rogers J."/>
        </authorList>
    </citation>
    <scope>NUCLEOTIDE SEQUENCE [LARGE SCALE GENOMIC DNA]</scope>
</reference>
<reference evidence="22 31" key="5">
    <citation type="submission" date="2005-07" db="EMBL/GenBank/DDBJ databases">
        <authorList>
            <person name="Mural R.J."/>
            <person name="Istrail S."/>
            <person name="Sutton G.G."/>
            <person name="Florea L."/>
            <person name="Halpern A.L."/>
            <person name="Mobarry C.M."/>
            <person name="Lippert R."/>
            <person name="Walenz B."/>
            <person name="Shatkay H."/>
            <person name="Dew I."/>
            <person name="Miller J.R."/>
            <person name="Flanigan M.J."/>
            <person name="Edwards N.J."/>
            <person name="Bolanos R."/>
            <person name="Fasulo D."/>
            <person name="Halldorsson B.V."/>
            <person name="Hannenhalli S."/>
            <person name="Turner R."/>
            <person name="Yooseph S."/>
            <person name="Lu F."/>
            <person name="Nusskern D.R."/>
            <person name="Shue B.C."/>
            <person name="Zheng X.H."/>
            <person name="Zhong F."/>
            <person name="Delcher A.L."/>
            <person name="Huson D.H."/>
            <person name="Kravitz S.A."/>
            <person name="Mouchard L."/>
            <person name="Reinert K."/>
            <person name="Remington K.A."/>
            <person name="Clark A.G."/>
            <person name="Waterman M.S."/>
            <person name="Eichler E.E."/>
            <person name="Adams M.D."/>
            <person name="Hunkapiller M.W."/>
            <person name="Myers E.W."/>
            <person name="Venter J.C."/>
        </authorList>
    </citation>
    <scope>NUCLEOTIDE SEQUENCE [LARGE SCALE GENOMIC DNA]</scope>
</reference>
<reference evidence="22 25" key="6">
    <citation type="journal article" date="2004" name="Genome Res.">
        <title>The status, quality, and expansion of the NIH full-length cDNA project: the Mammalian Gene Collection (MGC).</title>
        <authorList>
            <consortium name="The MGC Project Team"/>
        </authorList>
    </citation>
    <scope>NUCLEOTIDE SEQUENCE [LARGE SCALE MRNA] (ISOFORM 1)</scope>
    <source>
        <tissue evidence="25">Kidney</tissue>
        <tissue evidence="26">Lung</tissue>
    </source>
</reference>
<reference key="7">
    <citation type="journal article" date="2007" name="BMC Genomics">
        <title>The full-ORF clone resource of the German cDNA consortium.</title>
        <authorList>
            <person name="Bechtel S."/>
            <person name="Rosenfelder H."/>
            <person name="Duda A."/>
            <person name="Schmidt C.P."/>
            <person name="Ernst U."/>
            <person name="Wellenreuther R."/>
            <person name="Mehrle A."/>
            <person name="Schuster C."/>
            <person name="Bahr A."/>
            <person name="Bloecker H."/>
            <person name="Heubner D."/>
            <person name="Hoerlein A."/>
            <person name="Michel G."/>
            <person name="Wedler H."/>
            <person name="Koehrer K."/>
            <person name="Ottenwaelder B."/>
            <person name="Poustka A."/>
            <person name="Wiemann S."/>
            <person name="Schupp I."/>
        </authorList>
    </citation>
    <scope>NUCLEOTIDE SEQUENCE [LARGE SCALE MRNA] OF 23-373 (ISOFORM 2)</scope>
    <source>
        <tissue>Esophageal carcinoma</tissue>
    </source>
</reference>
<reference evidence="22" key="8">
    <citation type="journal article" date="2004" name="Oncogene">
        <title>AMID is a p53-inducible gene downregulated in tumors.</title>
        <authorList>
            <person name="Wu M."/>
            <person name="Xu L.-G."/>
            <person name="Su T."/>
            <person name="Tian Y."/>
            <person name="Zhai Z."/>
            <person name="Shu H.-B."/>
        </authorList>
    </citation>
    <scope>INDUCTION</scope>
</reference>
<reference evidence="22" key="9">
    <citation type="journal article" date="2005" name="J. Biol. Chem.">
        <title>The human apoptosis-inducing protein AMID is an oxidoreductase with a modified flavin cofactor and DNA binding activity.</title>
        <authorList>
            <person name="Marshall K.R."/>
            <person name="Gong M."/>
            <person name="Wodke L."/>
            <person name="Lamb J.H."/>
            <person name="Jones D.J."/>
            <person name="Farmer P.B."/>
            <person name="Scrutton N.S."/>
            <person name="Munro A.W."/>
        </authorList>
    </citation>
    <scope>FUNCTION</scope>
    <scope>COFACTOR</scope>
    <scope>CAUTION</scope>
</reference>
<reference key="10">
    <citation type="journal article" date="2010" name="Proteomics">
        <title>Strategy for comprehensive identification of human N-myristoylated proteins using an insect cell-free protein synthesis system.</title>
        <authorList>
            <person name="Suzuki T."/>
            <person name="Moriya K."/>
            <person name="Nagatoshi K."/>
            <person name="Ota Y."/>
            <person name="Ezure T."/>
            <person name="Ando E."/>
            <person name="Tsunasawa S."/>
            <person name="Utsumi T."/>
        </authorList>
    </citation>
    <scope>MYRISTOYLATION AT GLY-2</scope>
</reference>
<reference key="11">
    <citation type="journal article" date="2011" name="BMC Syst. Biol.">
        <title>Initial characterization of the human central proteome.</title>
        <authorList>
            <person name="Burkard T.R."/>
            <person name="Planyavsky M."/>
            <person name="Kaupe I."/>
            <person name="Breitwieser F.P."/>
            <person name="Buerckstuemmer T."/>
            <person name="Bennett K.L."/>
            <person name="Superti-Furga G."/>
            <person name="Colinge J."/>
        </authorList>
    </citation>
    <scope>IDENTIFICATION BY MASS SPECTROMETRY [LARGE SCALE ANALYSIS]</scope>
</reference>
<reference key="12">
    <citation type="journal article" date="2014" name="Nat. Commun.">
        <title>Global profiling of co- and post-translationally N-myristoylated proteomes in human cells.</title>
        <authorList>
            <person name="Thinon E."/>
            <person name="Serwa R.A."/>
            <person name="Broncel M."/>
            <person name="Brannigan J.A."/>
            <person name="Brassat U."/>
            <person name="Wright M.H."/>
            <person name="Heal W.P."/>
            <person name="Wilkinson A.J."/>
            <person name="Mann D.J."/>
            <person name="Tate E.W."/>
        </authorList>
    </citation>
    <scope>MYRISTOYLATION AT GLY-2</scope>
    <scope>CLEAVAGE OF INITIATOR METHIONINE</scope>
    <scope>IDENTIFICATION BY MASS SPECTROMETRY</scope>
</reference>
<reference key="13">
    <citation type="journal article" date="2016" name="Free Radic. Biol. Med.">
        <title>Novel role of 4-hydroxy-2-nonenal in AIFm2-mediated mitochondrial stress signaling.</title>
        <authorList>
            <person name="Miriyala S."/>
            <person name="Thippakorn C."/>
            <person name="Chaiswing L."/>
            <person name="Xu Y."/>
            <person name="Noel T."/>
            <person name="Tovmasyan A."/>
            <person name="Batinic-Haberle I."/>
            <person name="Vander Kooi C.W."/>
            <person name="Chi W."/>
            <person name="Latif A.A."/>
            <person name="Panchatcharam M."/>
            <person name="Prachayasittikul V."/>
            <person name="Butterfield D.A."/>
            <person name="Vore M."/>
            <person name="Moscow J."/>
            <person name="St Clair D.K."/>
        </authorList>
    </citation>
    <scope>FUNCTION</scope>
    <scope>SUBCELLULAR LOCATION</scope>
    <scope>CAUTION</scope>
</reference>
<reference key="14">
    <citation type="journal article" date="2019" name="Nature">
        <title>FSP1 is a glutathione-independent ferroptosis suppressor.</title>
        <authorList>
            <person name="Doll S."/>
            <person name="Freitas F.P."/>
            <person name="Shah R."/>
            <person name="Aldrovandi M."/>
            <person name="da Silva M.C."/>
            <person name="Ingold I."/>
            <person name="Grocin A.G."/>
            <person name="Xavier da Silva T.N."/>
            <person name="Panzilius E."/>
            <person name="Scheel C."/>
            <person name="Mourao A."/>
            <person name="Buday K."/>
            <person name="Sato M."/>
            <person name="Wanninger J."/>
            <person name="Vignane T."/>
            <person name="Mohana V."/>
            <person name="Rehberg M."/>
            <person name="Flatley A."/>
            <person name="Schepers A."/>
            <person name="Kurz A."/>
            <person name="White D."/>
            <person name="Sauer M."/>
            <person name="Sattler M."/>
            <person name="Tate E.W."/>
            <person name="Schmitz W."/>
            <person name="Schulze A."/>
            <person name="O'Donnel V."/>
            <person name="Proneth B."/>
            <person name="Popowicz G.M."/>
            <person name="Pratt D."/>
            <person name="Angeli J.P.F."/>
            <person name="Conrad M."/>
        </authorList>
    </citation>
    <scope>FUNCTION</scope>
    <scope>CATALYTIC ACTIVITY</scope>
    <scope>MYRISTOYLATION AT GLY-2</scope>
    <scope>MUTAGENESIS OF GLY-2</scope>
    <scope>CAUTION</scope>
</reference>
<reference key="15">
    <citation type="journal article" date="2019" name="Nature">
        <title>The CoQ oxidoreductase FSP1 acts parallel to GPX4 to inhibit ferroptosis.</title>
        <authorList>
            <person name="Bersuker K."/>
            <person name="Hendricks J."/>
            <person name="Li Z."/>
            <person name="Magtanong L."/>
            <person name="Ford B."/>
            <person name="Tang P.H."/>
            <person name="Roberts M.A."/>
            <person name="Tong B."/>
            <person name="Maimone T.J."/>
            <person name="Zoncu R."/>
            <person name="Bassik M.C."/>
            <person name="Nomura D.K."/>
            <person name="Dixon S.J."/>
            <person name="Olzmann J.A."/>
        </authorList>
    </citation>
    <scope>FUNCTION</scope>
    <scope>CATALYTIC ACTIVITY</scope>
    <scope>MYRISTOYLATION AT GLY-2</scope>
    <scope>SUBCELLULAR LOCATION</scope>
    <scope>MUTAGENESIS OF GLU-156</scope>
    <scope>CAUTION</scope>
</reference>
<reference key="16">
    <citation type="journal article" date="2022" name="Nature">
        <title>A non-canonical vitamin K cycle is a potent ferroptosis suppressor.</title>
        <authorList>
            <person name="Mishima E."/>
            <person name="Ito J."/>
            <person name="Wu Z."/>
            <person name="Nakamura T."/>
            <person name="Wahida A."/>
            <person name="Doll S."/>
            <person name="Tonnus W."/>
            <person name="Nepachalovich P."/>
            <person name="Eggenhofer E."/>
            <person name="Aldrovandi M."/>
            <person name="Henkelmann B."/>
            <person name="Yamada K.I."/>
            <person name="Wanninger J."/>
            <person name="Zilka O."/>
            <person name="Sato E."/>
            <person name="Feederle R."/>
            <person name="Hass D."/>
            <person name="Maida A."/>
            <person name="Mourao A.S.D."/>
            <person name="Linkermann A."/>
            <person name="Geissler E.K."/>
            <person name="Nakagawa K."/>
            <person name="Abe T."/>
            <person name="Fedorova M."/>
            <person name="Proneth B."/>
            <person name="Pratt D.A."/>
            <person name="Conrad M."/>
        </authorList>
    </citation>
    <scope>FUNCTION</scope>
    <scope>CATALYTIC ACTIVITY</scope>
</reference>
<reference key="17">
    <citation type="journal article" date="2025" name="EMBO J.">
        <title>SLC25A1 and ACLY maintain cytosolic acetyl-CoA and regulate ferroptosis susceptibility via FSP1 acetylation.</title>
        <authorList>
            <person name="Li W."/>
            <person name="Han J."/>
            <person name="Huang B."/>
            <person name="Xu T."/>
            <person name="Wan Y."/>
            <person name="Luo D."/>
            <person name="Kong W."/>
            <person name="Yu Y."/>
            <person name="Zhang L."/>
            <person name="Nian Y."/>
            <person name="Chu B."/>
            <person name="Yin C."/>
        </authorList>
    </citation>
    <scope>FUNCTION</scope>
    <scope>ACETYLATION AT LYS-168</scope>
    <scope>UBIQUITINATION</scope>
    <scope>MUTAGENESIS OF LYS-168</scope>
</reference>
<proteinExistence type="evidence at protein level"/>
<accession>Q9BRQ8</accession>
<accession>B3KXI0</accession>
<accession>Q63Z39</accession>
<gene>
    <name evidence="19 32" type="primary">AIFM2</name>
    <name evidence="15" type="synonym">AMID</name>
    <name evidence="16" type="synonym">PRG3</name>
</gene>
<organism>
    <name type="scientific">Homo sapiens</name>
    <name type="common">Human</name>
    <dbReference type="NCBI Taxonomy" id="9606"/>
    <lineage>
        <taxon>Eukaryota</taxon>
        <taxon>Metazoa</taxon>
        <taxon>Chordata</taxon>
        <taxon>Craniata</taxon>
        <taxon>Vertebrata</taxon>
        <taxon>Euteleostomi</taxon>
        <taxon>Mammalia</taxon>
        <taxon>Eutheria</taxon>
        <taxon>Euarchontoglires</taxon>
        <taxon>Primates</taxon>
        <taxon>Haplorrhini</taxon>
        <taxon>Catarrhini</taxon>
        <taxon>Hominidae</taxon>
        <taxon>Homo</taxon>
    </lineage>
</organism>